<comment type="function">
    <text evidence="1">Cell wall formation. Catalyzes the addition of glutamate to the nucleotide precursor UDP-N-acetylmuramoyl-L-alanine (UMA).</text>
</comment>
<comment type="catalytic activity">
    <reaction evidence="1">
        <text>UDP-N-acetyl-alpha-D-muramoyl-L-alanine + D-glutamate + ATP = UDP-N-acetyl-alpha-D-muramoyl-L-alanyl-D-glutamate + ADP + phosphate + H(+)</text>
        <dbReference type="Rhea" id="RHEA:16429"/>
        <dbReference type="ChEBI" id="CHEBI:15378"/>
        <dbReference type="ChEBI" id="CHEBI:29986"/>
        <dbReference type="ChEBI" id="CHEBI:30616"/>
        <dbReference type="ChEBI" id="CHEBI:43474"/>
        <dbReference type="ChEBI" id="CHEBI:83898"/>
        <dbReference type="ChEBI" id="CHEBI:83900"/>
        <dbReference type="ChEBI" id="CHEBI:456216"/>
        <dbReference type="EC" id="6.3.2.9"/>
    </reaction>
</comment>
<comment type="pathway">
    <text evidence="1">Cell wall biogenesis; peptidoglycan biosynthesis.</text>
</comment>
<comment type="subcellular location">
    <subcellularLocation>
        <location evidence="1">Cytoplasm</location>
    </subcellularLocation>
</comment>
<comment type="similarity">
    <text evidence="1">Belongs to the MurCDEF family.</text>
</comment>
<keyword id="KW-0067">ATP-binding</keyword>
<keyword id="KW-0131">Cell cycle</keyword>
<keyword id="KW-0132">Cell division</keyword>
<keyword id="KW-0133">Cell shape</keyword>
<keyword id="KW-0961">Cell wall biogenesis/degradation</keyword>
<keyword id="KW-0963">Cytoplasm</keyword>
<keyword id="KW-0436">Ligase</keyword>
<keyword id="KW-0547">Nucleotide-binding</keyword>
<keyword id="KW-0573">Peptidoglycan synthesis</keyword>
<evidence type="ECO:0000255" key="1">
    <source>
        <dbReference type="HAMAP-Rule" id="MF_00639"/>
    </source>
</evidence>
<name>MURD_TROW8</name>
<accession>Q83HK0</accession>
<gene>
    <name evidence="1" type="primary">murD</name>
    <name type="ordered locus">TW544</name>
</gene>
<sequence>MSRVEGLTSWYSDWQGLSAAILGIGVSGFAAADSLRELGVDVTVYAPEKHTRYNKLLDAIGARYVCAYLDELCEVDVDFIVVSPGISPDNPVIKRLRDRQIPILSEIELAWRVRDKVNTCPWILITGTNGKTTTALLTGSMLAKDGARVAVCGNIGTPVLDAVRNPKGFDYFVVELSSFQLSLLPMHGNGAVKGFSSACVNLDEDHLEWHGAKELYYRAKSRVYHGTTGFCVYNLDDEETKKMVEQACVARNVRAIGFGLCVPDVGQVGIVDGILCDRAFLSARKDSALEITSVEKLEKNKLSMRHIISDVLCAVALARSVETNPLSISRALDEFCLSPHRTEVVAKEMGVMWVNDSKATNPHAVIASLSNFSRVILIFGGLMKGVDVSGIFDRFYETIKAVVVIGKNQSFVGNIKCKKIVCIPDSNDPMSEAVAAADLLATPGDTVLLSPGGSSFDQFESYEHRGNCFINAVKDLVKRK</sequence>
<proteinExistence type="inferred from homology"/>
<feature type="chain" id="PRO_0000109117" description="UDP-N-acetylmuramoylalanine--D-glutamate ligase">
    <location>
        <begin position="1"/>
        <end position="480"/>
    </location>
</feature>
<feature type="binding site" evidence="1">
    <location>
        <begin position="127"/>
        <end position="133"/>
    </location>
    <ligand>
        <name>ATP</name>
        <dbReference type="ChEBI" id="CHEBI:30616"/>
    </ligand>
</feature>
<organism>
    <name type="scientific">Tropheryma whipplei (strain TW08/27)</name>
    <name type="common">Whipple's bacillus</name>
    <dbReference type="NCBI Taxonomy" id="218496"/>
    <lineage>
        <taxon>Bacteria</taxon>
        <taxon>Bacillati</taxon>
        <taxon>Actinomycetota</taxon>
        <taxon>Actinomycetes</taxon>
        <taxon>Micrococcales</taxon>
        <taxon>Tropherymataceae</taxon>
        <taxon>Tropheryma</taxon>
    </lineage>
</organism>
<protein>
    <recommendedName>
        <fullName evidence="1">UDP-N-acetylmuramoylalanine--D-glutamate ligase</fullName>
        <ecNumber evidence="1">6.3.2.9</ecNumber>
    </recommendedName>
    <alternativeName>
        <fullName evidence="1">D-glutamic acid-adding enzyme</fullName>
    </alternativeName>
    <alternativeName>
        <fullName evidence="1">UDP-N-acetylmuramoyl-L-alanyl-D-glutamate synthetase</fullName>
    </alternativeName>
</protein>
<reference key="1">
    <citation type="journal article" date="2003" name="Lancet">
        <title>Sequencing and analysis of the genome of the Whipple's disease bacterium Tropheryma whipplei.</title>
        <authorList>
            <person name="Bentley S.D."/>
            <person name="Maiwald M."/>
            <person name="Murphy L.D."/>
            <person name="Pallen M.J."/>
            <person name="Yeats C.A."/>
            <person name="Dover L.G."/>
            <person name="Norbertczak H.T."/>
            <person name="Besra G.S."/>
            <person name="Quail M.A."/>
            <person name="Harris D.E."/>
            <person name="von Herbay A."/>
            <person name="Goble A."/>
            <person name="Rutter S."/>
            <person name="Squares R."/>
            <person name="Squares S."/>
            <person name="Barrell B.G."/>
            <person name="Parkhill J."/>
            <person name="Relman D.A."/>
        </authorList>
    </citation>
    <scope>NUCLEOTIDE SEQUENCE [LARGE SCALE GENOMIC DNA]</scope>
    <source>
        <strain>TW08/27</strain>
    </source>
</reference>
<dbReference type="EC" id="6.3.2.9" evidence="1"/>
<dbReference type="EMBL" id="BX251411">
    <property type="protein sequence ID" value="CAD67210.1"/>
    <property type="molecule type" value="Genomic_DNA"/>
</dbReference>
<dbReference type="SMR" id="Q83HK0"/>
<dbReference type="KEGG" id="tws:TW544"/>
<dbReference type="HOGENOM" id="CLU_032540_0_0_11"/>
<dbReference type="UniPathway" id="UPA00219"/>
<dbReference type="GO" id="GO:0005737">
    <property type="term" value="C:cytoplasm"/>
    <property type="evidence" value="ECO:0007669"/>
    <property type="project" value="UniProtKB-SubCell"/>
</dbReference>
<dbReference type="GO" id="GO:0005524">
    <property type="term" value="F:ATP binding"/>
    <property type="evidence" value="ECO:0007669"/>
    <property type="project" value="UniProtKB-UniRule"/>
</dbReference>
<dbReference type="GO" id="GO:0004326">
    <property type="term" value="F:tetrahydrofolylpolyglutamate synthase activity"/>
    <property type="evidence" value="ECO:0007669"/>
    <property type="project" value="InterPro"/>
</dbReference>
<dbReference type="GO" id="GO:0008764">
    <property type="term" value="F:UDP-N-acetylmuramoylalanine-D-glutamate ligase activity"/>
    <property type="evidence" value="ECO:0007669"/>
    <property type="project" value="UniProtKB-UniRule"/>
</dbReference>
<dbReference type="GO" id="GO:0051301">
    <property type="term" value="P:cell division"/>
    <property type="evidence" value="ECO:0007669"/>
    <property type="project" value="UniProtKB-KW"/>
</dbReference>
<dbReference type="GO" id="GO:0071555">
    <property type="term" value="P:cell wall organization"/>
    <property type="evidence" value="ECO:0007669"/>
    <property type="project" value="UniProtKB-KW"/>
</dbReference>
<dbReference type="GO" id="GO:0009252">
    <property type="term" value="P:peptidoglycan biosynthetic process"/>
    <property type="evidence" value="ECO:0007669"/>
    <property type="project" value="UniProtKB-UniRule"/>
</dbReference>
<dbReference type="GO" id="GO:0008360">
    <property type="term" value="P:regulation of cell shape"/>
    <property type="evidence" value="ECO:0007669"/>
    <property type="project" value="UniProtKB-KW"/>
</dbReference>
<dbReference type="Gene3D" id="3.90.190.20">
    <property type="entry name" value="Mur ligase, C-terminal domain"/>
    <property type="match status" value="1"/>
</dbReference>
<dbReference type="Gene3D" id="3.40.1190.10">
    <property type="entry name" value="Mur-like, catalytic domain"/>
    <property type="match status" value="1"/>
</dbReference>
<dbReference type="Gene3D" id="3.40.50.720">
    <property type="entry name" value="NAD(P)-binding Rossmann-like Domain"/>
    <property type="match status" value="1"/>
</dbReference>
<dbReference type="HAMAP" id="MF_00639">
    <property type="entry name" value="MurD"/>
    <property type="match status" value="1"/>
</dbReference>
<dbReference type="InterPro" id="IPR018109">
    <property type="entry name" value="Folylpolyglutamate_synth_CS"/>
</dbReference>
<dbReference type="InterPro" id="IPR036565">
    <property type="entry name" value="Mur-like_cat_sf"/>
</dbReference>
<dbReference type="InterPro" id="IPR004101">
    <property type="entry name" value="Mur_ligase_C"/>
</dbReference>
<dbReference type="InterPro" id="IPR036615">
    <property type="entry name" value="Mur_ligase_C_dom_sf"/>
</dbReference>
<dbReference type="InterPro" id="IPR013221">
    <property type="entry name" value="Mur_ligase_cen"/>
</dbReference>
<dbReference type="InterPro" id="IPR005762">
    <property type="entry name" value="MurD"/>
</dbReference>
<dbReference type="NCBIfam" id="TIGR01087">
    <property type="entry name" value="murD"/>
    <property type="match status" value="1"/>
</dbReference>
<dbReference type="PANTHER" id="PTHR43692">
    <property type="entry name" value="UDP-N-ACETYLMURAMOYLALANINE--D-GLUTAMATE LIGASE"/>
    <property type="match status" value="1"/>
</dbReference>
<dbReference type="PANTHER" id="PTHR43692:SF1">
    <property type="entry name" value="UDP-N-ACETYLMURAMOYLALANINE--D-GLUTAMATE LIGASE"/>
    <property type="match status" value="1"/>
</dbReference>
<dbReference type="Pfam" id="PF02875">
    <property type="entry name" value="Mur_ligase_C"/>
    <property type="match status" value="1"/>
</dbReference>
<dbReference type="Pfam" id="PF08245">
    <property type="entry name" value="Mur_ligase_M"/>
    <property type="match status" value="1"/>
</dbReference>
<dbReference type="Pfam" id="PF21799">
    <property type="entry name" value="MurD-like_N"/>
    <property type="match status" value="1"/>
</dbReference>
<dbReference type="SUPFAM" id="SSF51984">
    <property type="entry name" value="MurCD N-terminal domain"/>
    <property type="match status" value="1"/>
</dbReference>
<dbReference type="SUPFAM" id="SSF53623">
    <property type="entry name" value="MurD-like peptide ligases, catalytic domain"/>
    <property type="match status" value="1"/>
</dbReference>
<dbReference type="SUPFAM" id="SSF53244">
    <property type="entry name" value="MurD-like peptide ligases, peptide-binding domain"/>
    <property type="match status" value="1"/>
</dbReference>